<name>METE_BIFAA</name>
<comment type="function">
    <text evidence="1">Catalyzes the transfer of a methyl group from 5-methyltetrahydrofolate to homocysteine resulting in methionine formation.</text>
</comment>
<comment type="catalytic activity">
    <reaction evidence="1">
        <text>5-methyltetrahydropteroyltri-L-glutamate + L-homocysteine = tetrahydropteroyltri-L-glutamate + L-methionine</text>
        <dbReference type="Rhea" id="RHEA:21196"/>
        <dbReference type="ChEBI" id="CHEBI:57844"/>
        <dbReference type="ChEBI" id="CHEBI:58140"/>
        <dbReference type="ChEBI" id="CHEBI:58199"/>
        <dbReference type="ChEBI" id="CHEBI:58207"/>
        <dbReference type="EC" id="2.1.1.14"/>
    </reaction>
</comment>
<comment type="cofactor">
    <cofactor evidence="1">
        <name>Zn(2+)</name>
        <dbReference type="ChEBI" id="CHEBI:29105"/>
    </cofactor>
    <text evidence="1">Binds 1 zinc ion per subunit.</text>
</comment>
<comment type="pathway">
    <text evidence="1">Amino-acid biosynthesis; L-methionine biosynthesis via de novo pathway; L-methionine from L-homocysteine (MetE route): step 1/1.</text>
</comment>
<comment type="similarity">
    <text evidence="1">Belongs to the vitamin-B12 independent methionine synthase family.</text>
</comment>
<reference key="1">
    <citation type="submission" date="2006-12" db="EMBL/GenBank/DDBJ databases">
        <title>Bifidobacterium adolescentis complete genome sequence.</title>
        <authorList>
            <person name="Suzuki T."/>
            <person name="Tsuda Y."/>
            <person name="Kanou N."/>
            <person name="Inoue T."/>
            <person name="Kumazaki K."/>
            <person name="Nagano S."/>
            <person name="Hirai S."/>
            <person name="Tanaka K."/>
            <person name="Watanabe K."/>
        </authorList>
    </citation>
    <scope>NUCLEOTIDE SEQUENCE [LARGE SCALE GENOMIC DNA]</scope>
    <source>
        <strain>ATCC 15703 / DSM 20083 / NCTC 11814 / E194a</strain>
    </source>
</reference>
<feature type="chain" id="PRO_1000017225" description="5-methyltetrahydropteroyltriglutamate--homocysteine methyltransferase">
    <location>
        <begin position="1"/>
        <end position="768"/>
    </location>
</feature>
<feature type="active site" description="Proton donor" evidence="1">
    <location>
        <position position="706"/>
    </location>
</feature>
<feature type="binding site" evidence="1">
    <location>
        <begin position="17"/>
        <end position="20"/>
    </location>
    <ligand>
        <name>5-methyltetrahydropteroyltri-L-glutamate</name>
        <dbReference type="ChEBI" id="CHEBI:58207"/>
    </ligand>
</feature>
<feature type="binding site" evidence="1">
    <location>
        <position position="117"/>
    </location>
    <ligand>
        <name>5-methyltetrahydropteroyltri-L-glutamate</name>
        <dbReference type="ChEBI" id="CHEBI:58207"/>
    </ligand>
</feature>
<feature type="binding site" evidence="1">
    <location>
        <begin position="442"/>
        <end position="444"/>
    </location>
    <ligand>
        <name>L-homocysteine</name>
        <dbReference type="ChEBI" id="CHEBI:58199"/>
    </ligand>
</feature>
<feature type="binding site" evidence="1">
    <location>
        <begin position="442"/>
        <end position="444"/>
    </location>
    <ligand>
        <name>L-methionine</name>
        <dbReference type="ChEBI" id="CHEBI:57844"/>
    </ligand>
</feature>
<feature type="binding site" evidence="1">
    <location>
        <position position="495"/>
    </location>
    <ligand>
        <name>L-homocysteine</name>
        <dbReference type="ChEBI" id="CHEBI:58199"/>
    </ligand>
</feature>
<feature type="binding site" evidence="1">
    <location>
        <position position="495"/>
    </location>
    <ligand>
        <name>L-methionine</name>
        <dbReference type="ChEBI" id="CHEBI:57844"/>
    </ligand>
</feature>
<feature type="binding site" evidence="1">
    <location>
        <begin position="526"/>
        <end position="527"/>
    </location>
    <ligand>
        <name>5-methyltetrahydropteroyltri-L-glutamate</name>
        <dbReference type="ChEBI" id="CHEBI:58207"/>
    </ligand>
</feature>
<feature type="binding site" evidence="1">
    <location>
        <position position="572"/>
    </location>
    <ligand>
        <name>5-methyltetrahydropteroyltri-L-glutamate</name>
        <dbReference type="ChEBI" id="CHEBI:58207"/>
    </ligand>
</feature>
<feature type="binding site" evidence="1">
    <location>
        <position position="610"/>
    </location>
    <ligand>
        <name>L-homocysteine</name>
        <dbReference type="ChEBI" id="CHEBI:58199"/>
    </ligand>
</feature>
<feature type="binding site" evidence="1">
    <location>
        <position position="610"/>
    </location>
    <ligand>
        <name>L-methionine</name>
        <dbReference type="ChEBI" id="CHEBI:57844"/>
    </ligand>
</feature>
<feature type="binding site" evidence="1">
    <location>
        <position position="616"/>
    </location>
    <ligand>
        <name>5-methyltetrahydropteroyltri-L-glutamate</name>
        <dbReference type="ChEBI" id="CHEBI:58207"/>
    </ligand>
</feature>
<feature type="binding site" evidence="1">
    <location>
        <position position="653"/>
    </location>
    <ligand>
        <name>Zn(2+)</name>
        <dbReference type="ChEBI" id="CHEBI:29105"/>
        <note>catalytic</note>
    </ligand>
</feature>
<feature type="binding site" evidence="1">
    <location>
        <position position="655"/>
    </location>
    <ligand>
        <name>Zn(2+)</name>
        <dbReference type="ChEBI" id="CHEBI:29105"/>
        <note>catalytic</note>
    </ligand>
</feature>
<feature type="binding site" evidence="1">
    <location>
        <position position="677"/>
    </location>
    <ligand>
        <name>Zn(2+)</name>
        <dbReference type="ChEBI" id="CHEBI:29105"/>
        <note>catalytic</note>
    </ligand>
</feature>
<feature type="binding site" evidence="1">
    <location>
        <position position="738"/>
    </location>
    <ligand>
        <name>Zn(2+)</name>
        <dbReference type="ChEBI" id="CHEBI:29105"/>
        <note>catalytic</note>
    </ligand>
</feature>
<gene>
    <name evidence="1" type="primary">metE</name>
    <name type="ordered locus">BAD_0756</name>
</gene>
<proteinExistence type="inferred from homology"/>
<sequence length="768" mass="86080">MSALTSVSGFPRIGQNRELKKIIEAYWKGNTTLDEVRATAKELRAKHWKLQQAAGIDLIPSNDFSYYDQMLDTAILLNVIPQRYQRLAFENPEETLFAMGRGYQGEKGDVTALPMKKWFTTNYHYLVPEIDSATDIKLNSTKPFDEFNEAKALGITTKPVLIGPYTFLKLARNPQAEELDYDKGLVNAVAAVYAEVVAKFAELGVQWIQIDEPYLVLDKEPGDVELFKSLYAKILPAREGKVKVLLNTYFGHIADVYETVNLLGFDGIGLDLNEGKDENLAAVEKYGVAEKTTIFAGVINGRNIWRNNYAVSLGLVDALKQVTANVAVSTASSLLHVPFSTEGEDGLADDVRKHFAFAVQKLDELHEVAVLADASDDEKKASAELAANQALFDGTRVAADPAVAKRIASLTDADFVRQPARAERQKEQREALNLPLLPTTTIGSFPQTKEVRAERAKLRKGEITKAEYDEFMKNQIDACIKHQEEIGLDVLVHGEFERNDMVEYFGQNLNGFLFTKNAWVQSYGTRCVKPPIVWGDVSRANPITVEWSAYAQSRTDHVMKGMLTGPVTILNWSWPREDITHEQQTQQLALAIRDEVLDLEKAGIKVIQIDEAALREKLPLRKTDWHKKYLDWAIPAFRLVHSAVKPTTQIHTHMCYSEFNDIIKDIDAMDADVISFEASRGDLVVLDAIHDANFETEAGPGVYDIHSPRIPSEQEIEDRIYEILKKMDVEKVWINPDCGLKTRGNAETWPSLENLVAAAKAVRAKLAK</sequence>
<accession>A1A1F4</accession>
<protein>
    <recommendedName>
        <fullName evidence="1">5-methyltetrahydropteroyltriglutamate--homocysteine methyltransferase</fullName>
        <ecNumber evidence="1">2.1.1.14</ecNumber>
    </recommendedName>
    <alternativeName>
        <fullName evidence="1">Cobalamin-independent methionine synthase</fullName>
    </alternativeName>
    <alternativeName>
        <fullName evidence="1">Methionine synthase, vitamin-B12 independent isozyme</fullName>
    </alternativeName>
</protein>
<organism>
    <name type="scientific">Bifidobacterium adolescentis (strain ATCC 15703 / DSM 20083 / NCTC 11814 / E194a)</name>
    <dbReference type="NCBI Taxonomy" id="367928"/>
    <lineage>
        <taxon>Bacteria</taxon>
        <taxon>Bacillati</taxon>
        <taxon>Actinomycetota</taxon>
        <taxon>Actinomycetes</taxon>
        <taxon>Bifidobacteriales</taxon>
        <taxon>Bifidobacteriaceae</taxon>
        <taxon>Bifidobacterium</taxon>
    </lineage>
</organism>
<evidence type="ECO:0000255" key="1">
    <source>
        <dbReference type="HAMAP-Rule" id="MF_00172"/>
    </source>
</evidence>
<dbReference type="EC" id="2.1.1.14" evidence="1"/>
<dbReference type="EMBL" id="AP009256">
    <property type="protein sequence ID" value="BAF39537.1"/>
    <property type="molecule type" value="Genomic_DNA"/>
</dbReference>
<dbReference type="RefSeq" id="WP_011743157.1">
    <property type="nucleotide sequence ID" value="NC_008618.1"/>
</dbReference>
<dbReference type="SMR" id="A1A1F4"/>
<dbReference type="STRING" id="367928.BAD_0756"/>
<dbReference type="PaxDb" id="1680-BADO_0804"/>
<dbReference type="GeneID" id="4556409"/>
<dbReference type="KEGG" id="bad:BAD_0756"/>
<dbReference type="HOGENOM" id="CLU_013175_0_0_11"/>
<dbReference type="UniPathway" id="UPA00051">
    <property type="reaction ID" value="UER00082"/>
</dbReference>
<dbReference type="Proteomes" id="UP000008702">
    <property type="component" value="Chromosome"/>
</dbReference>
<dbReference type="GO" id="GO:0003871">
    <property type="term" value="F:5-methyltetrahydropteroyltriglutamate-homocysteine S-methyltransferase activity"/>
    <property type="evidence" value="ECO:0007669"/>
    <property type="project" value="UniProtKB-UniRule"/>
</dbReference>
<dbReference type="GO" id="GO:0008270">
    <property type="term" value="F:zinc ion binding"/>
    <property type="evidence" value="ECO:0007669"/>
    <property type="project" value="InterPro"/>
</dbReference>
<dbReference type="GO" id="GO:0009086">
    <property type="term" value="P:methionine biosynthetic process"/>
    <property type="evidence" value="ECO:0007669"/>
    <property type="project" value="UniProtKB-UniRule"/>
</dbReference>
<dbReference type="GO" id="GO:0032259">
    <property type="term" value="P:methylation"/>
    <property type="evidence" value="ECO:0007669"/>
    <property type="project" value="UniProtKB-KW"/>
</dbReference>
<dbReference type="CDD" id="cd03311">
    <property type="entry name" value="CIMS_C_terminal_like"/>
    <property type="match status" value="1"/>
</dbReference>
<dbReference type="CDD" id="cd03312">
    <property type="entry name" value="CIMS_N_terminal_like"/>
    <property type="match status" value="1"/>
</dbReference>
<dbReference type="Gene3D" id="3.20.20.210">
    <property type="match status" value="2"/>
</dbReference>
<dbReference type="HAMAP" id="MF_00172">
    <property type="entry name" value="Meth_synth"/>
    <property type="match status" value="1"/>
</dbReference>
<dbReference type="InterPro" id="IPR013215">
    <property type="entry name" value="Cbl-indep_Met_Synth_N"/>
</dbReference>
<dbReference type="InterPro" id="IPR006276">
    <property type="entry name" value="Cobalamin-indep_Met_synthase"/>
</dbReference>
<dbReference type="InterPro" id="IPR002629">
    <property type="entry name" value="Met_Synth_C/arc"/>
</dbReference>
<dbReference type="InterPro" id="IPR038071">
    <property type="entry name" value="UROD/MetE-like_sf"/>
</dbReference>
<dbReference type="NCBIfam" id="TIGR01371">
    <property type="entry name" value="met_syn_B12ind"/>
    <property type="match status" value="1"/>
</dbReference>
<dbReference type="NCBIfam" id="NF003556">
    <property type="entry name" value="PRK05222.1"/>
    <property type="match status" value="1"/>
</dbReference>
<dbReference type="PANTHER" id="PTHR30519">
    <property type="entry name" value="5-METHYLTETRAHYDROPTEROYLTRIGLUTAMATE--HOMOCYSTEINE METHYLTRANSFERASE"/>
    <property type="match status" value="1"/>
</dbReference>
<dbReference type="Pfam" id="PF08267">
    <property type="entry name" value="Meth_synt_1"/>
    <property type="match status" value="1"/>
</dbReference>
<dbReference type="Pfam" id="PF01717">
    <property type="entry name" value="Meth_synt_2"/>
    <property type="match status" value="1"/>
</dbReference>
<dbReference type="PIRSF" id="PIRSF000382">
    <property type="entry name" value="MeTrfase_B12_ind"/>
    <property type="match status" value="1"/>
</dbReference>
<dbReference type="SUPFAM" id="SSF51726">
    <property type="entry name" value="UROD/MetE-like"/>
    <property type="match status" value="2"/>
</dbReference>
<keyword id="KW-0028">Amino-acid biosynthesis</keyword>
<keyword id="KW-0479">Metal-binding</keyword>
<keyword id="KW-0486">Methionine biosynthesis</keyword>
<keyword id="KW-0489">Methyltransferase</keyword>
<keyword id="KW-1185">Reference proteome</keyword>
<keyword id="KW-0677">Repeat</keyword>
<keyword id="KW-0808">Transferase</keyword>
<keyword id="KW-0862">Zinc</keyword>